<gene>
    <name evidence="14" type="primary">crn-3</name>
    <name evidence="14" type="ORF">C14A4.4</name>
</gene>
<name>EXOSX_CAEEL</name>
<accession>G5EBX6</accession>
<accession>Q8I129</accession>
<comment type="function">
    <text evidence="1 5 6 7 8">Catalytic component of the RNA exosome complex which has 3'-&gt;5' exoribonuclease activity and participates in a multitude of cellular RNA processing and degradation events (By similarity). Involved in apoptotic DNA degradation (PubMed:12718884). Involved in regulation of antisense ribosomal siRNA production (PubMed:30224484, PubMed:34365510). Involved in response to cold-warm shock (PubMed:36763670).</text>
</comment>
<comment type="cofactor">
    <cofactor evidence="1">
        <name>Mg(2+)</name>
        <dbReference type="ChEBI" id="CHEBI:18420"/>
    </cofactor>
</comment>
<comment type="subunit">
    <text evidence="1 5">Component of the RNA exosome complex (By similarity). Interacts with crn-5 (PubMed:12718884).</text>
</comment>
<comment type="subcellular location">
    <subcellularLocation>
        <location evidence="7 8">Nucleus</location>
    </subcellularLocation>
    <subcellularLocation>
        <location evidence="7 8">Nucleus</location>
        <location evidence="7 8">Nucleolus</location>
    </subcellularLocation>
    <subcellularLocation>
        <location evidence="8">Nucleus</location>
        <location evidence="8">Nucleoplasm</location>
    </subcellularLocation>
    <text evidence="8">As a part of exosome complex, translocates from the nucleolus to nucleoplasm in response to cold-warm shock.</text>
</comment>
<comment type="alternative products">
    <event type="alternative splicing"/>
    <isoform>
        <id>G5EBX6-1</id>
        <name>a</name>
        <sequence type="displayed"/>
    </isoform>
    <isoform>
        <id>G5EBX6-2</id>
        <name>b</name>
        <sequence type="described" ref="VSP_062033"/>
    </isoform>
</comment>
<comment type="tissue specificity">
    <text evidence="7">Ubiquitously expressed.</text>
</comment>
<comment type="disruption phenotype">
    <text evidence="5">RNAi-mediated knockdown results in retarded growth, low penetrance of embryonic lethality, accumulation of apoptotic DNA in 1.5-fold stage embryos and delayed appearance of embryonic cell corpses during development.</text>
</comment>
<comment type="similarity">
    <text evidence="11">Belongs to the exosome component 10/RRP6 family.</text>
</comment>
<sequence length="876" mass="100925">MSGEESMPDEEQKQSEEEEEMIRKRTLAMRKKVEEIMRNGAGLVRESNGLPKAGADYELYNSYPTFNTFMKRSEQRLNALMNKVTKSIGCAMRVPDVGSSVEHYTECVIEAQDNIAERAATLHEALKKAELDEIVKVPEFITKAAPTNRKTEAEVSAAMRTFSANIGTVLAEKFRERREEAAQMVVLEKPQKTYNISSDNSQAPFSSKLTVKHHAIEKRTGIVLHDDDESGRRDWISAETETEEEHPYIAEILHFKVPEAQLKSAECLKFTALKDTPLTMIDTKEKLEALTKTLNSVKEFAVDLEHHQMRSYLGLTCLIQISTRDEDFIIDPFPIWDHVGMLNEPFANPRILKVFHGSDSDVLWLQRDYGVHVVNLFDTYVAMKKLKYPKFSLAYLTLRFADVVLDKQYQLADWRARPLRNAMINYAREDTHYLLYSYDMLREQLLKQDTKDLANVYSESSDLCIKVYKKPVFNPKGYLTEIKFRFTLNTRQDYALTHLFKWRDVVARAEDESPHFVLPNHMMLSLSETLPRDVGGIYACCNPLPYFVKQRTGDILKIIVEARDVKLEKVGLSAKERNDAQEARGVMNDTMDHITSVLKSKIDFSHTRFDEERGEIYIDKTDEGMDIELKDHKESLLSVLQTAEIPSVETMIVVEKGKKSDNQKVKKLLNELDKFVTPFECYQMMMITKEKQEEEERKEAERKKLEEGDLPKTMFSHHDAPINRKPEFDAKLLNVDTLKLVPDDPNKPKDPEPSPMEESSSEPQIFDPSRFTDDQLLSKKAMKRKRDAARRNIDVSVVLGESSSSSDPKKKKSDDDAPVEDFDYEKADSSAFEKPVRDNNADFDPFHQKYRLKNKTKKNMAMKKSSNRQGTINYKK</sequence>
<feature type="chain" id="PRO_0000459064" description="Exosome complex component 10 homolog">
    <location>
        <begin position="1"/>
        <end position="876"/>
    </location>
</feature>
<feature type="domain" description="3'-5' exonuclease" evidence="2">
    <location>
        <begin position="279"/>
        <end position="445"/>
    </location>
</feature>
<feature type="domain" description="HRDC" evidence="3">
    <location>
        <begin position="489"/>
        <end position="569"/>
    </location>
</feature>
<feature type="region of interest" description="Disordered" evidence="4">
    <location>
        <begin position="1"/>
        <end position="22"/>
    </location>
</feature>
<feature type="region of interest" description="Disordered" evidence="4">
    <location>
        <begin position="690"/>
        <end position="876"/>
    </location>
</feature>
<feature type="compositionally biased region" description="Basic and acidic residues" evidence="4">
    <location>
        <begin position="690"/>
        <end position="730"/>
    </location>
</feature>
<feature type="compositionally biased region" description="Basic and acidic residues" evidence="4">
    <location>
        <begin position="741"/>
        <end position="752"/>
    </location>
</feature>
<feature type="compositionally biased region" description="Basic and acidic residues" evidence="4">
    <location>
        <begin position="834"/>
        <end position="847"/>
    </location>
</feature>
<feature type="compositionally biased region" description="Basic residues" evidence="4">
    <location>
        <begin position="848"/>
        <end position="861"/>
    </location>
</feature>
<feature type="binding site" evidence="1">
    <location>
        <position position="303"/>
    </location>
    <ligand>
        <name>Mg(2+)</name>
        <dbReference type="ChEBI" id="CHEBI:18420"/>
        <label>1</label>
    </ligand>
</feature>
<feature type="binding site" evidence="1">
    <location>
        <position position="303"/>
    </location>
    <ligand>
        <name>Mg(2+)</name>
        <dbReference type="ChEBI" id="CHEBI:18420"/>
        <label>2</label>
    </ligand>
</feature>
<feature type="binding site" evidence="1">
    <location>
        <position position="305"/>
    </location>
    <ligand>
        <name>Mg(2+)</name>
        <dbReference type="ChEBI" id="CHEBI:18420"/>
        <label>2</label>
    </ligand>
</feature>
<feature type="binding site" evidence="1">
    <location>
        <position position="361"/>
    </location>
    <ligand>
        <name>Mg(2+)</name>
        <dbReference type="ChEBI" id="CHEBI:18420"/>
        <label>1</label>
    </ligand>
</feature>
<feature type="binding site" evidence="1">
    <location>
        <position position="430"/>
    </location>
    <ligand>
        <name>Mg(2+)</name>
        <dbReference type="ChEBI" id="CHEBI:18420"/>
        <label>2</label>
    </ligand>
</feature>
<feature type="splice variant" id="VSP_062033" description="In isoform b.">
    <location>
        <begin position="1"/>
        <end position="6"/>
    </location>
</feature>
<feature type="mutagenesis site" description="Results in mislocalization from the nucleolus to the nucleoplasm in the absence of cold-warm shock." evidence="8">
    <original>D</original>
    <variation>N</variation>
    <location>
        <position position="303"/>
    </location>
</feature>
<feature type="mutagenesis site" description="Results in mislocalization from the nucleolus to the nucleoplasm in the absence of cold-warm shock." evidence="8">
    <original>E</original>
    <variation>Q</variation>
    <location>
        <position position="305"/>
    </location>
</feature>
<evidence type="ECO:0000250" key="1">
    <source>
        <dbReference type="UniProtKB" id="Q01780"/>
    </source>
</evidence>
<evidence type="ECO:0000255" key="2"/>
<evidence type="ECO:0000255" key="3">
    <source>
        <dbReference type="PROSITE-ProRule" id="PRU00328"/>
    </source>
</evidence>
<evidence type="ECO:0000256" key="4">
    <source>
        <dbReference type="SAM" id="MobiDB-lite"/>
    </source>
</evidence>
<evidence type="ECO:0000269" key="5">
    <source>
    </source>
</evidence>
<evidence type="ECO:0000269" key="6">
    <source>
    </source>
</evidence>
<evidence type="ECO:0000269" key="7">
    <source>
    </source>
</evidence>
<evidence type="ECO:0000269" key="8">
    <source>
    </source>
</evidence>
<evidence type="ECO:0000303" key="9">
    <source>
    </source>
</evidence>
<evidence type="ECO:0000303" key="10">
    <source>
    </source>
</evidence>
<evidence type="ECO:0000305" key="11"/>
<evidence type="ECO:0000312" key="12">
    <source>
        <dbReference type="EMBL" id="AAP57299.1"/>
    </source>
</evidence>
<evidence type="ECO:0000312" key="13">
    <source>
        <dbReference type="Proteomes" id="UP000001940"/>
    </source>
</evidence>
<evidence type="ECO:0000312" key="14">
    <source>
        <dbReference type="WormBase" id="C14A4.4a"/>
    </source>
</evidence>
<keyword id="KW-0025">Alternative splicing</keyword>
<keyword id="KW-0053">Apoptosis</keyword>
<keyword id="KW-0269">Exonuclease</keyword>
<keyword id="KW-0271">Exosome</keyword>
<keyword id="KW-0378">Hydrolase</keyword>
<keyword id="KW-0540">Nuclease</keyword>
<keyword id="KW-0539">Nucleus</keyword>
<keyword id="KW-1185">Reference proteome</keyword>
<keyword id="KW-0698">rRNA processing</keyword>
<organism evidence="13">
    <name type="scientific">Caenorhabditis elegans</name>
    <dbReference type="NCBI Taxonomy" id="6239"/>
    <lineage>
        <taxon>Eukaryota</taxon>
        <taxon>Metazoa</taxon>
        <taxon>Ecdysozoa</taxon>
        <taxon>Nematoda</taxon>
        <taxon>Chromadorea</taxon>
        <taxon>Rhabditida</taxon>
        <taxon>Rhabditina</taxon>
        <taxon>Rhabditomorpha</taxon>
        <taxon>Rhabditoidea</taxon>
        <taxon>Rhabditidae</taxon>
        <taxon>Peloderinae</taxon>
        <taxon>Caenorhabditis</taxon>
    </lineage>
</organism>
<dbReference type="EC" id="3.1.13.-" evidence="1"/>
<dbReference type="EMBL" id="AY303577">
    <property type="protein sequence ID" value="AAP57299.1"/>
    <property type="molecule type" value="mRNA"/>
</dbReference>
<dbReference type="EMBL" id="BX284602">
    <property type="protein sequence ID" value="CAA90108.1"/>
    <property type="molecule type" value="Genomic_DNA"/>
</dbReference>
<dbReference type="EMBL" id="BX284602">
    <property type="protein sequence ID" value="CAD59140.2"/>
    <property type="molecule type" value="Genomic_DNA"/>
</dbReference>
<dbReference type="PIR" id="T19246">
    <property type="entry name" value="T19246"/>
</dbReference>
<dbReference type="RefSeq" id="NP_001309468.1">
    <property type="nucleotide sequence ID" value="NM_001322753.1"/>
</dbReference>
<dbReference type="RefSeq" id="NP_001379075.1">
    <molecule id="G5EBX6-1"/>
    <property type="nucleotide sequence ID" value="NM_001393179.1"/>
</dbReference>
<dbReference type="RefSeq" id="NP_001417852.1">
    <molecule id="G5EBX6-2"/>
    <property type="nucleotide sequence ID" value="NM_001430931.1"/>
</dbReference>
<dbReference type="RefSeq" id="NP_496283.1">
    <property type="nucleotide sequence ID" value="NM_063882.5"/>
</dbReference>
<dbReference type="SMR" id="G5EBX6"/>
<dbReference type="FunCoup" id="G5EBX6">
    <property type="interactions" value="2727"/>
</dbReference>
<dbReference type="STRING" id="6239.C14A4.4a.1"/>
<dbReference type="PaxDb" id="6239-C14A4.4a"/>
<dbReference type="PeptideAtlas" id="G5EBX6"/>
<dbReference type="EnsemblMetazoa" id="C14A4.4a.1">
    <molecule id="G5EBX6-1"/>
    <property type="protein sequence ID" value="C14A4.4a.1"/>
    <property type="gene ID" value="WBGene00000796"/>
</dbReference>
<dbReference type="EnsemblMetazoa" id="C14A4.4b.1">
    <molecule id="G5EBX6-2"/>
    <property type="protein sequence ID" value="C14A4.4b.1"/>
    <property type="gene ID" value="WBGene00000796"/>
</dbReference>
<dbReference type="GeneID" id="3565889"/>
<dbReference type="UCSC" id="C14A4.4a">
    <property type="organism name" value="c. elegans"/>
</dbReference>
<dbReference type="AGR" id="WB:WBGene00000796"/>
<dbReference type="WormBase" id="C14A4.4a">
    <molecule id="G5EBX6-1"/>
    <property type="protein sequence ID" value="CE02145"/>
    <property type="gene ID" value="WBGene00000796"/>
    <property type="gene designation" value="crn-3"/>
</dbReference>
<dbReference type="WormBase" id="C14A4.4b">
    <molecule id="G5EBX6-2"/>
    <property type="protein sequence ID" value="CE51406"/>
    <property type="gene ID" value="WBGene00000796"/>
    <property type="gene designation" value="crn-3"/>
</dbReference>
<dbReference type="eggNOG" id="KOG2206">
    <property type="taxonomic scope" value="Eukaryota"/>
</dbReference>
<dbReference type="GeneTree" id="ENSGT00390000015408"/>
<dbReference type="HOGENOM" id="CLU_010129_2_0_1"/>
<dbReference type="OMA" id="LPMRTEG"/>
<dbReference type="OrthoDB" id="2250022at2759"/>
<dbReference type="Reactome" id="R-CEL-6791226">
    <property type="pathway name" value="Major pathway of rRNA processing in the nucleolus and cytosol"/>
</dbReference>
<dbReference type="PRO" id="PR:G5EBX6"/>
<dbReference type="Proteomes" id="UP000001940">
    <property type="component" value="Chromosome II"/>
</dbReference>
<dbReference type="Bgee" id="WBGene00000796">
    <property type="expression patterns" value="Expressed in germ line (C elegans) and 4 other cell types or tissues"/>
</dbReference>
<dbReference type="ExpressionAtlas" id="G5EBX6">
    <property type="expression patterns" value="baseline and differential"/>
</dbReference>
<dbReference type="GO" id="GO:0000178">
    <property type="term" value="C:exosome (RNase complex)"/>
    <property type="evidence" value="ECO:0000304"/>
    <property type="project" value="WormBase"/>
</dbReference>
<dbReference type="GO" id="GO:0000176">
    <property type="term" value="C:nuclear exosome (RNase complex)"/>
    <property type="evidence" value="ECO:0000318"/>
    <property type="project" value="GO_Central"/>
</dbReference>
<dbReference type="GO" id="GO:0005730">
    <property type="term" value="C:nucleolus"/>
    <property type="evidence" value="ECO:0000318"/>
    <property type="project" value="GO_Central"/>
</dbReference>
<dbReference type="GO" id="GO:0005654">
    <property type="term" value="C:nucleoplasm"/>
    <property type="evidence" value="ECO:0007669"/>
    <property type="project" value="UniProtKB-SubCell"/>
</dbReference>
<dbReference type="GO" id="GO:0000175">
    <property type="term" value="F:3'-5'-RNA exonuclease activity"/>
    <property type="evidence" value="ECO:0000318"/>
    <property type="project" value="GO_Central"/>
</dbReference>
<dbReference type="GO" id="GO:0000166">
    <property type="term" value="F:nucleotide binding"/>
    <property type="evidence" value="ECO:0007669"/>
    <property type="project" value="InterPro"/>
</dbReference>
<dbReference type="GO" id="GO:0003727">
    <property type="term" value="F:single-stranded RNA binding"/>
    <property type="evidence" value="ECO:0000318"/>
    <property type="project" value="GO_Central"/>
</dbReference>
<dbReference type="GO" id="GO:0043277">
    <property type="term" value="P:apoptotic cell clearance"/>
    <property type="evidence" value="ECO:0000314"/>
    <property type="project" value="WormBase"/>
</dbReference>
<dbReference type="GO" id="GO:0006309">
    <property type="term" value="P:apoptotic DNA fragmentation"/>
    <property type="evidence" value="ECO:0000315"/>
    <property type="project" value="WormBase"/>
</dbReference>
<dbReference type="GO" id="GO:0000467">
    <property type="term" value="P:exonucleolytic trimming to generate mature 3'-end of 5.8S rRNA from tricistronic rRNA transcript (SSU-rRNA, 5.8S rRNA, LSU-rRNA)"/>
    <property type="evidence" value="ECO:0000318"/>
    <property type="project" value="GO_Central"/>
</dbReference>
<dbReference type="GO" id="GO:0071044">
    <property type="term" value="P:histone mRNA catabolic process"/>
    <property type="evidence" value="ECO:0000318"/>
    <property type="project" value="GO_Central"/>
</dbReference>
<dbReference type="GO" id="GO:0071040">
    <property type="term" value="P:nuclear polyadenylation-dependent antisense transcript catabolic process"/>
    <property type="evidence" value="ECO:0000318"/>
    <property type="project" value="GO_Central"/>
</dbReference>
<dbReference type="GO" id="GO:0071039">
    <property type="term" value="P:nuclear polyadenylation-dependent CUT catabolic process"/>
    <property type="evidence" value="ECO:0000318"/>
    <property type="project" value="GO_Central"/>
</dbReference>
<dbReference type="GO" id="GO:0071035">
    <property type="term" value="P:nuclear polyadenylation-dependent rRNA catabolic process"/>
    <property type="evidence" value="ECO:0000318"/>
    <property type="project" value="GO_Central"/>
</dbReference>
<dbReference type="GO" id="GO:0071036">
    <property type="term" value="P:nuclear polyadenylation-dependent snoRNA catabolic process"/>
    <property type="evidence" value="ECO:0000318"/>
    <property type="project" value="GO_Central"/>
</dbReference>
<dbReference type="GO" id="GO:0071037">
    <property type="term" value="P:nuclear polyadenylation-dependent snRNA catabolic process"/>
    <property type="evidence" value="ECO:0000318"/>
    <property type="project" value="GO_Central"/>
</dbReference>
<dbReference type="GO" id="GO:0071051">
    <property type="term" value="P:poly(A)-dependent snoRNA 3'-end processing"/>
    <property type="evidence" value="ECO:0000318"/>
    <property type="project" value="GO_Central"/>
</dbReference>
<dbReference type="GO" id="GO:0006396">
    <property type="term" value="P:RNA processing"/>
    <property type="evidence" value="ECO:0000304"/>
    <property type="project" value="WormBase"/>
</dbReference>
<dbReference type="GO" id="GO:0071038">
    <property type="term" value="P:TRAMP-dependent tRNA surveillance pathway"/>
    <property type="evidence" value="ECO:0000318"/>
    <property type="project" value="GO_Central"/>
</dbReference>
<dbReference type="CDD" id="cd06147">
    <property type="entry name" value="Rrp6p_like_exo"/>
    <property type="match status" value="1"/>
</dbReference>
<dbReference type="FunFam" id="3.30.420.10:FF:000059">
    <property type="entry name" value="Exosome complex exonuclease Rrp6"/>
    <property type="match status" value="1"/>
</dbReference>
<dbReference type="FunFam" id="1.10.150.80:FF:000001">
    <property type="entry name" value="Putative exosome component 10"/>
    <property type="match status" value="1"/>
</dbReference>
<dbReference type="Gene3D" id="1.10.150.80">
    <property type="entry name" value="HRDC domain"/>
    <property type="match status" value="1"/>
</dbReference>
<dbReference type="Gene3D" id="3.30.420.10">
    <property type="entry name" value="Ribonuclease H-like superfamily/Ribonuclease H"/>
    <property type="match status" value="1"/>
</dbReference>
<dbReference type="InterPro" id="IPR002562">
    <property type="entry name" value="3'-5'_exonuclease_dom"/>
</dbReference>
<dbReference type="InterPro" id="IPR012588">
    <property type="entry name" value="Exosome-assoc_fac_Rrp6_N"/>
</dbReference>
<dbReference type="InterPro" id="IPR010997">
    <property type="entry name" value="HRDC-like_sf"/>
</dbReference>
<dbReference type="InterPro" id="IPR002121">
    <property type="entry name" value="HRDC_dom"/>
</dbReference>
<dbReference type="InterPro" id="IPR044876">
    <property type="entry name" value="HRDC_dom_sf"/>
</dbReference>
<dbReference type="InterPro" id="IPR012337">
    <property type="entry name" value="RNaseH-like_sf"/>
</dbReference>
<dbReference type="InterPro" id="IPR036397">
    <property type="entry name" value="RNaseH_sf"/>
</dbReference>
<dbReference type="InterPro" id="IPR045092">
    <property type="entry name" value="Rrp6-like"/>
</dbReference>
<dbReference type="InterPro" id="IPR049559">
    <property type="entry name" value="Rrp6p-like_exo"/>
</dbReference>
<dbReference type="PANTHER" id="PTHR12124:SF47">
    <property type="entry name" value="EXOSOME COMPONENT 10"/>
    <property type="match status" value="1"/>
</dbReference>
<dbReference type="PANTHER" id="PTHR12124">
    <property type="entry name" value="POLYMYOSITIS/SCLERODERMA AUTOANTIGEN-RELATED"/>
    <property type="match status" value="1"/>
</dbReference>
<dbReference type="Pfam" id="PF01612">
    <property type="entry name" value="DNA_pol_A_exo1"/>
    <property type="match status" value="1"/>
</dbReference>
<dbReference type="Pfam" id="PF00570">
    <property type="entry name" value="HRDC"/>
    <property type="match status" value="1"/>
</dbReference>
<dbReference type="Pfam" id="PF08066">
    <property type="entry name" value="PMC2NT"/>
    <property type="match status" value="1"/>
</dbReference>
<dbReference type="SMART" id="SM00474">
    <property type="entry name" value="35EXOc"/>
    <property type="match status" value="1"/>
</dbReference>
<dbReference type="SMART" id="SM00341">
    <property type="entry name" value="HRDC"/>
    <property type="match status" value="1"/>
</dbReference>
<dbReference type="SUPFAM" id="SSF47819">
    <property type="entry name" value="HRDC-like"/>
    <property type="match status" value="1"/>
</dbReference>
<dbReference type="SUPFAM" id="SSF53098">
    <property type="entry name" value="Ribonuclease H-like"/>
    <property type="match status" value="1"/>
</dbReference>
<dbReference type="PROSITE" id="PS50967">
    <property type="entry name" value="HRDC"/>
    <property type="match status" value="1"/>
</dbReference>
<reference evidence="12" key="1">
    <citation type="journal article" date="2003" name="Mol. Cell">
        <title>Functional genomic analysis of apoptotic DNA degradation in C. elegans.</title>
        <authorList>
            <person name="Parrish J.Z."/>
            <person name="Xue D."/>
        </authorList>
    </citation>
    <scope>NUCLEOTIDE SEQUENCE [MRNA]</scope>
    <scope>FUNCTION</scope>
    <scope>INTERACTION WITH CRN-5</scope>
    <scope>DISRUPTION PHENOTYPE</scope>
</reference>
<reference evidence="13" key="2">
    <citation type="journal article" date="1998" name="Science">
        <title>Genome sequence of the nematode C. elegans: a platform for investigating biology.</title>
        <authorList>
            <consortium name="The C. elegans sequencing consortium"/>
        </authorList>
    </citation>
    <scope>NUCLEOTIDE SEQUENCE [LARGE SCALE GENOMIC DNA]</scope>
    <source>
        <strain evidence="13">Bristol N2</strain>
    </source>
</reference>
<reference evidence="11" key="3">
    <citation type="journal article" date="2018" name="Proc. Natl. Acad. Sci. U.S.A.">
        <title>Erroneous ribosomal RNAs promote the generation of antisense ribosomal siRNA.</title>
        <authorList>
            <person name="Zhu C."/>
            <person name="Yan Q."/>
            <person name="Weng C."/>
            <person name="Hou X."/>
            <person name="Mao H."/>
            <person name="Liu D."/>
            <person name="Feng X."/>
            <person name="Guang S."/>
        </authorList>
    </citation>
    <scope>FUNCTION</scope>
</reference>
<reference evidence="11" key="4">
    <citation type="journal article" date="2021" name="Nucleic Acids Res.">
        <title>Antisense ribosomal siRNAs inhibit RNA polymerase I-directed transcription in C. elegans.</title>
        <authorList>
            <person name="Liao S."/>
            <person name="Chen X."/>
            <person name="Xu T."/>
            <person name="Jin Q."/>
            <person name="Xu Z."/>
            <person name="Xu D."/>
            <person name="Zhou X."/>
            <person name="Zhu C."/>
            <person name="Guang S."/>
            <person name="Feng X."/>
        </authorList>
    </citation>
    <scope>FUNCTION</scope>
    <scope>SUBCELLULAR LOCATION</scope>
    <scope>TISSUE SPECIFICITY</scope>
</reference>
<reference evidence="11" key="5">
    <citation type="journal article" date="2023" name="PLoS Genet.">
        <title>A ZTF-7/RPS-2 complex mediates the cold-warm response in C. elegans.</title>
        <authorList>
            <person name="Xu T."/>
            <person name="Liao S."/>
            <person name="Huang M."/>
            <person name="Zhu C."/>
            <person name="Huang X."/>
            <person name="Jin Q."/>
            <person name="Xu D."/>
            <person name="Fu C."/>
            <person name="Chen X."/>
            <person name="Feng X."/>
            <person name="Guang S."/>
        </authorList>
    </citation>
    <scope>FUNCTION</scope>
    <scope>SUBCELLULAR LOCATION</scope>
    <scope>MUTAGENESIS OF ASP-303 AND GLU-305</scope>
</reference>
<protein>
    <recommendedName>
        <fullName evidence="11">Exosome complex component 10 homolog</fullName>
        <shortName evidence="10">EXOS-10</shortName>
        <ecNumber evidence="1">3.1.13.-</ecNumber>
    </recommendedName>
    <alternativeName>
        <fullName evidence="9">Cell death-related nuclease 3</fullName>
    </alternativeName>
</protein>
<proteinExistence type="evidence at protein level"/>